<evidence type="ECO:0000255" key="1"/>
<evidence type="ECO:0000269" key="2">
    <source>
    </source>
</evidence>
<evidence type="ECO:0000305" key="3"/>
<evidence type="ECO:0000305" key="4">
    <source>
    </source>
</evidence>
<evidence type="ECO:0007829" key="5">
    <source>
        <dbReference type="PDB" id="1VF5"/>
    </source>
</evidence>
<evidence type="ECO:0007829" key="6">
    <source>
        <dbReference type="PDB" id="2E74"/>
    </source>
</evidence>
<evidence type="ECO:0007829" key="7">
    <source>
        <dbReference type="PDB" id="2E76"/>
    </source>
</evidence>
<evidence type="ECO:0007829" key="8">
    <source>
        <dbReference type="PDB" id="4I7Z"/>
    </source>
</evidence>
<feature type="signal peptide" evidence="1">
    <location>
        <begin position="1"/>
        <end position="37"/>
    </location>
</feature>
<feature type="chain" id="PRO_0000207977" description="Cytochrome f">
    <location>
        <begin position="38"/>
        <end position="333"/>
    </location>
</feature>
<feature type="topological domain" description="Cytoplasmic" evidence="4">
    <location>
        <begin position="38"/>
        <end position="298"/>
    </location>
</feature>
<feature type="transmembrane region" description="Helical" evidence="4">
    <location>
        <begin position="299"/>
        <end position="319"/>
    </location>
</feature>
<feature type="topological domain" description="Lumenal, thylakoid" evidence="4">
    <location>
        <begin position="320"/>
        <end position="333"/>
    </location>
</feature>
<feature type="binding site" description="axial binding residue" evidence="2">
    <location>
        <position position="45"/>
    </location>
    <ligand>
        <name>heme</name>
        <dbReference type="ChEBI" id="CHEBI:30413"/>
    </ligand>
    <ligandPart>
        <name>Fe</name>
        <dbReference type="ChEBI" id="CHEBI:18248"/>
    </ligandPart>
</feature>
<feature type="binding site" description="covalent" evidence="2">
    <location>
        <position position="66"/>
    </location>
    <ligand>
        <name>heme</name>
        <dbReference type="ChEBI" id="CHEBI:30413"/>
    </ligand>
</feature>
<feature type="binding site" description="covalent" evidence="2">
    <location>
        <position position="69"/>
    </location>
    <ligand>
        <name>heme</name>
        <dbReference type="ChEBI" id="CHEBI:30413"/>
    </ligand>
</feature>
<feature type="binding site" description="axial binding residue" evidence="2">
    <location>
        <position position="70"/>
    </location>
    <ligand>
        <name>heme</name>
        <dbReference type="ChEBI" id="CHEBI:30413"/>
    </ligand>
    <ligandPart>
        <name>Fe</name>
        <dbReference type="ChEBI" id="CHEBI:18248"/>
    </ligandPart>
</feature>
<feature type="helix" evidence="8">
    <location>
        <begin position="46"/>
        <end position="52"/>
    </location>
</feature>
<feature type="strand" evidence="6">
    <location>
        <begin position="53"/>
        <end position="55"/>
    </location>
</feature>
<feature type="helix" evidence="8">
    <location>
        <begin position="65"/>
        <end position="68"/>
    </location>
</feature>
<feature type="strand" evidence="8">
    <location>
        <begin position="77"/>
        <end position="79"/>
    </location>
</feature>
<feature type="strand" evidence="8">
    <location>
        <begin position="82"/>
        <end position="84"/>
    </location>
</feature>
<feature type="strand" evidence="8">
    <location>
        <begin position="89"/>
        <end position="95"/>
    </location>
</feature>
<feature type="strand" evidence="8">
    <location>
        <begin position="107"/>
        <end position="109"/>
    </location>
</feature>
<feature type="strand" evidence="8">
    <location>
        <begin position="115"/>
        <end position="121"/>
    </location>
</feature>
<feature type="helix" evidence="8">
    <location>
        <begin position="131"/>
        <end position="133"/>
    </location>
</feature>
<feature type="helix" evidence="8">
    <location>
        <begin position="136"/>
        <end position="142"/>
    </location>
</feature>
<feature type="strand" evidence="8">
    <location>
        <begin position="148"/>
        <end position="151"/>
    </location>
</feature>
<feature type="strand" evidence="8">
    <location>
        <begin position="157"/>
        <end position="164"/>
    </location>
</feature>
<feature type="turn" evidence="8">
    <location>
        <begin position="165"/>
        <end position="167"/>
    </location>
</feature>
<feature type="strand" evidence="8">
    <location>
        <begin position="169"/>
        <end position="176"/>
    </location>
</feature>
<feature type="turn" evidence="8">
    <location>
        <begin position="180"/>
        <end position="182"/>
    </location>
</feature>
<feature type="strand" evidence="8">
    <location>
        <begin position="189"/>
        <end position="200"/>
    </location>
</feature>
<feature type="strand" evidence="8">
    <location>
        <begin position="212"/>
        <end position="214"/>
    </location>
</feature>
<feature type="strand" evidence="5">
    <location>
        <begin position="219"/>
        <end position="222"/>
    </location>
</feature>
<feature type="strand" evidence="6">
    <location>
        <begin position="227"/>
        <end position="230"/>
    </location>
</feature>
<feature type="strand" evidence="8">
    <location>
        <begin position="233"/>
        <end position="235"/>
    </location>
</feature>
<feature type="strand" evidence="6">
    <location>
        <begin position="238"/>
        <end position="242"/>
    </location>
</feature>
<feature type="strand" evidence="8">
    <location>
        <begin position="245"/>
        <end position="248"/>
    </location>
</feature>
<feature type="strand" evidence="6">
    <location>
        <begin position="252"/>
        <end position="254"/>
    </location>
</feature>
<feature type="strand" evidence="8">
    <location>
        <begin position="255"/>
        <end position="259"/>
    </location>
</feature>
<feature type="strand" evidence="8">
    <location>
        <begin position="283"/>
        <end position="293"/>
    </location>
</feature>
<feature type="helix" evidence="8">
    <location>
        <begin position="296"/>
        <end position="328"/>
    </location>
</feature>
<feature type="turn" evidence="7">
    <location>
        <begin position="329"/>
        <end position="331"/>
    </location>
</feature>
<comment type="function">
    <text evidence="4">Component of the cytochrome b6-f complex, which mediates electron transfer between photosystem II (PSII) and photosystem I (PSI), cyclic electron flow around PSI, and state transitions.</text>
</comment>
<comment type="cofactor">
    <cofactor evidence="2">
        <name>heme</name>
        <dbReference type="ChEBI" id="CHEBI:30413"/>
    </cofactor>
    <text evidence="2">Binds 1 heme group covalently.</text>
</comment>
<comment type="subunit">
    <text evidence="2">The 4 large subunits of the cytochrome b6-f complex are cytochrome b6, subunit IV (17 kDa polypeptide, PetD), cytochrome f and the Rieske protein, while the 4 small subunits are PetG, PetL, PetM and PetN. The complex functions as a dimer.</text>
</comment>
<comment type="subcellular location">
    <subcellularLocation>
        <location evidence="2">Cellular thylakoid membrane</location>
        <topology evidence="2">Single-pass membrane protein</topology>
    </subcellularLocation>
</comment>
<comment type="similarity">
    <text evidence="3">Belongs to the cytochrome f family.</text>
</comment>
<reference key="1">
    <citation type="submission" date="2003-09" db="EMBL/GenBank/DDBJ databases">
        <title>Cloning and characterization of the petBD and petCA operon from the thermophilic cyanobacterium Mastigocladus laminosus.</title>
        <authorList>
            <person name="Yan J."/>
            <person name="Zhang H."/>
            <person name="Cramer W.A."/>
        </authorList>
    </citation>
    <scope>NUCLEOTIDE SEQUENCE [GENOMIC DNA]</scope>
</reference>
<reference key="2">
    <citation type="journal article" date="2003" name="Science">
        <title>Structure of the cytochrome b6f complex of oxygenic photosynthesis: tuning the cavity.</title>
        <authorList>
            <person name="Kurisu G."/>
            <person name="Zhang H."/>
            <person name="Smith J.L."/>
            <person name="Cramer W.A."/>
        </authorList>
    </citation>
    <scope>X-RAY CRYSTALLOGRAPHY (3.0 ANGSTROMS) IN COMPLEX WITH HEME IN CYTOCHROME B6-F COMPLEX</scope>
    <scope>FUNCTION</scope>
    <scope>COFACTOR</scope>
    <scope>SUBUNIT</scope>
    <scope>SUBCELLULAR LOCATION</scope>
    <scope>TOPOLOGY</scope>
</reference>
<keyword id="KW-0002">3D-structure</keyword>
<keyword id="KW-0249">Electron transport</keyword>
<keyword id="KW-0349">Heme</keyword>
<keyword id="KW-0408">Iron</keyword>
<keyword id="KW-0472">Membrane</keyword>
<keyword id="KW-0479">Metal-binding</keyword>
<keyword id="KW-0602">Photosynthesis</keyword>
<keyword id="KW-0732">Signal</keyword>
<keyword id="KW-0793">Thylakoid</keyword>
<keyword id="KW-0812">Transmembrane</keyword>
<keyword id="KW-1133">Transmembrane helix</keyword>
<keyword id="KW-0813">Transport</keyword>
<organism>
    <name type="scientific">Mastigocladus laminosus</name>
    <name type="common">Fischerella sp.</name>
    <dbReference type="NCBI Taxonomy" id="83541"/>
    <lineage>
        <taxon>Bacteria</taxon>
        <taxon>Bacillati</taxon>
        <taxon>Cyanobacteriota</taxon>
        <taxon>Cyanophyceae</taxon>
        <taxon>Nostocales</taxon>
        <taxon>Hapalosiphonaceae</taxon>
        <taxon>Mastigocladus</taxon>
    </lineage>
</organism>
<proteinExistence type="evidence at protein level"/>
<sequence>MRNSCKKARRTRPLKATIQALLVAIATMTFFFTSDIALPQSAAAYPFWAQQTYPETPREPTGRIVCANCHLAAKPAEVEVPQSVLPDTVFKAVVKIPYDTKLQQVAADGSKVGLNVGAVLMLPEGFKIAPEERIPEELKKEVGDVYFQPYKEGQDNVLLVGPLPGEQYQEIVFPVLSPNPTTDKNIHFGKYAIHLGANRGRGQIYPTGEKSNNNVFTASATGTITKIAKEEDEYGNVKYQVSIQTDSGKTVVDTIPAGPELIVSEGQAVKAGEALTNNPNVGGFGQDDTEIVLQDPNRVKWMIAFICLVMLAQLMLILKKKQVEKVQAAEMNF</sequence>
<gene>
    <name type="primary">petA</name>
</gene>
<accession>P83793</accession>
<accession>Q5YJJ7</accession>
<name>CYF_MASLA</name>
<protein>
    <recommendedName>
        <fullName>Cytochrome f</fullName>
    </recommendedName>
</protein>
<dbReference type="EMBL" id="AY390356">
    <property type="protein sequence ID" value="AAR26241.1"/>
    <property type="molecule type" value="Genomic_DNA"/>
</dbReference>
<dbReference type="PDB" id="1VF5">
    <property type="method" value="X-ray"/>
    <property type="resolution" value="3.00 A"/>
    <property type="chains" value="C/P=45-333"/>
</dbReference>
<dbReference type="PDB" id="2D2C">
    <property type="method" value="X-ray"/>
    <property type="resolution" value="3.80 A"/>
    <property type="chains" value="C/P=45-333"/>
</dbReference>
<dbReference type="PDB" id="2E74">
    <property type="method" value="X-ray"/>
    <property type="resolution" value="3.00 A"/>
    <property type="chains" value="C=45-333"/>
</dbReference>
<dbReference type="PDB" id="2E75">
    <property type="method" value="X-ray"/>
    <property type="resolution" value="3.55 A"/>
    <property type="chains" value="C=45-333"/>
</dbReference>
<dbReference type="PDB" id="2E76">
    <property type="method" value="X-ray"/>
    <property type="resolution" value="3.41 A"/>
    <property type="chains" value="C=45-333"/>
</dbReference>
<dbReference type="PDB" id="4H0L">
    <property type="method" value="X-ray"/>
    <property type="resolution" value="3.25 A"/>
    <property type="chains" value="C=45-333"/>
</dbReference>
<dbReference type="PDB" id="4H13">
    <property type="method" value="X-ray"/>
    <property type="resolution" value="3.07 A"/>
    <property type="chains" value="C=45-333"/>
</dbReference>
<dbReference type="PDB" id="4I7Z">
    <property type="method" value="X-ray"/>
    <property type="resolution" value="2.80 A"/>
    <property type="chains" value="C=45-333"/>
</dbReference>
<dbReference type="PDB" id="4PV1">
    <property type="method" value="X-ray"/>
    <property type="resolution" value="3.00 A"/>
    <property type="chains" value="C=45-333"/>
</dbReference>
<dbReference type="PDBsum" id="1VF5"/>
<dbReference type="PDBsum" id="2D2C"/>
<dbReference type="PDBsum" id="2E74"/>
<dbReference type="PDBsum" id="2E75"/>
<dbReference type="PDBsum" id="2E76"/>
<dbReference type="PDBsum" id="4H0L"/>
<dbReference type="PDBsum" id="4H13"/>
<dbReference type="PDBsum" id="4I7Z"/>
<dbReference type="PDBsum" id="4PV1"/>
<dbReference type="SMR" id="P83793"/>
<dbReference type="DrugBank" id="DB08453">
    <property type="generic name" value="2-Nonyl-4-quinolinol 1-oxide"/>
</dbReference>
<dbReference type="DrugBank" id="DB04646">
    <property type="generic name" value="Dibromothymoquinone"/>
</dbReference>
<dbReference type="EvolutionaryTrace" id="P83793"/>
<dbReference type="GO" id="GO:0031676">
    <property type="term" value="C:plasma membrane-derived thylakoid membrane"/>
    <property type="evidence" value="ECO:0007669"/>
    <property type="project" value="UniProtKB-SubCell"/>
</dbReference>
<dbReference type="GO" id="GO:0009055">
    <property type="term" value="F:electron transfer activity"/>
    <property type="evidence" value="ECO:0007669"/>
    <property type="project" value="UniProtKB-UniRule"/>
</dbReference>
<dbReference type="GO" id="GO:0020037">
    <property type="term" value="F:heme binding"/>
    <property type="evidence" value="ECO:0007669"/>
    <property type="project" value="InterPro"/>
</dbReference>
<dbReference type="GO" id="GO:0005506">
    <property type="term" value="F:iron ion binding"/>
    <property type="evidence" value="ECO:0007669"/>
    <property type="project" value="InterPro"/>
</dbReference>
<dbReference type="GO" id="GO:0015979">
    <property type="term" value="P:photosynthesis"/>
    <property type="evidence" value="ECO:0007669"/>
    <property type="project" value="UniProtKB-UniRule"/>
</dbReference>
<dbReference type="FunFam" id="2.60.40.830:FF:000001">
    <property type="entry name" value="Cytochrome f"/>
    <property type="match status" value="1"/>
</dbReference>
<dbReference type="Gene3D" id="2.40.50.100">
    <property type="match status" value="1"/>
</dbReference>
<dbReference type="Gene3D" id="2.60.40.830">
    <property type="entry name" value="Cytochrome f large domain"/>
    <property type="match status" value="1"/>
</dbReference>
<dbReference type="Gene3D" id="1.20.5.700">
    <property type="entry name" value="Single helix bin"/>
    <property type="match status" value="1"/>
</dbReference>
<dbReference type="HAMAP" id="MF_00610">
    <property type="entry name" value="Cytb6_f_cytF"/>
    <property type="match status" value="1"/>
</dbReference>
<dbReference type="InterPro" id="IPR024058">
    <property type="entry name" value="Cyt-f_TM"/>
</dbReference>
<dbReference type="InterPro" id="IPR002325">
    <property type="entry name" value="Cyt_f"/>
</dbReference>
<dbReference type="InterPro" id="IPR024094">
    <property type="entry name" value="Cyt_f_lg_dom"/>
</dbReference>
<dbReference type="InterPro" id="IPR036826">
    <property type="entry name" value="Cyt_f_lg_dom_sf"/>
</dbReference>
<dbReference type="InterPro" id="IPR011054">
    <property type="entry name" value="Rudment_hybrid_motif"/>
</dbReference>
<dbReference type="NCBIfam" id="NF002736">
    <property type="entry name" value="PRK02693.1"/>
    <property type="match status" value="1"/>
</dbReference>
<dbReference type="PANTHER" id="PTHR33288">
    <property type="match status" value="1"/>
</dbReference>
<dbReference type="PANTHER" id="PTHR33288:SF10">
    <property type="entry name" value="CYTOCHROME F"/>
    <property type="match status" value="1"/>
</dbReference>
<dbReference type="Pfam" id="PF01333">
    <property type="entry name" value="Apocytochr_F_C"/>
    <property type="match status" value="1"/>
</dbReference>
<dbReference type="Pfam" id="PF16639">
    <property type="entry name" value="Apocytochr_F_N"/>
    <property type="match status" value="1"/>
</dbReference>
<dbReference type="PRINTS" id="PR00610">
    <property type="entry name" value="CYTOCHROMEF"/>
</dbReference>
<dbReference type="SUPFAM" id="SSF103431">
    <property type="entry name" value="Cytochrome f subunit of the cytochrome b6f complex, transmembrane anchor"/>
    <property type="match status" value="1"/>
</dbReference>
<dbReference type="SUPFAM" id="SSF49441">
    <property type="entry name" value="Cytochrome f, large domain"/>
    <property type="match status" value="1"/>
</dbReference>
<dbReference type="SUPFAM" id="SSF51246">
    <property type="entry name" value="Rudiment single hybrid motif"/>
    <property type="match status" value="1"/>
</dbReference>
<dbReference type="PROSITE" id="PS51010">
    <property type="entry name" value="CYTF"/>
    <property type="match status" value="1"/>
</dbReference>